<name>OR5H8_HUMAN</name>
<evidence type="ECO:0000255" key="1"/>
<evidence type="ECO:0000255" key="2">
    <source>
        <dbReference type="PROSITE-ProRule" id="PRU00521"/>
    </source>
</evidence>
<evidence type="ECO:0000269" key="3">
    <source>
    </source>
</evidence>
<evidence type="ECO:0000303" key="4">
    <source>
    </source>
</evidence>
<evidence type="ECO:0000305" key="5"/>
<evidence type="ECO:0000312" key="6">
    <source>
        <dbReference type="HGNC" id="HGNC:14773"/>
    </source>
</evidence>
<dbReference type="EMBL" id="AC117473">
    <property type="status" value="NOT_ANNOTATED_CDS"/>
    <property type="molecule type" value="Genomic_DNA"/>
</dbReference>
<dbReference type="EMBL" id="BK004590">
    <property type="status" value="NOT_ANNOTATED_CDS"/>
    <property type="molecule type" value="Genomic_DNA"/>
</dbReference>
<dbReference type="SMR" id="P0DN80"/>
<dbReference type="FunCoup" id="P0DN80">
    <property type="interactions" value="1"/>
</dbReference>
<dbReference type="IntAct" id="P0DN80">
    <property type="interactions" value="2"/>
</dbReference>
<dbReference type="BioMuta" id="OR5H8"/>
<dbReference type="MassIVE" id="P0DN80"/>
<dbReference type="AGR" id="HGNC:14773"/>
<dbReference type="GeneCards" id="OR5H8"/>
<dbReference type="HGNC" id="HGNC:14773">
    <property type="gene designation" value="OR5H8"/>
</dbReference>
<dbReference type="neXtProt" id="NX_P0DN80"/>
<dbReference type="InParanoid" id="P0DN80"/>
<dbReference type="OrthoDB" id="9615015at2759"/>
<dbReference type="PAN-GO" id="P0DN80">
    <property type="GO annotations" value="2 GO annotations based on evolutionary models"/>
</dbReference>
<dbReference type="PathwayCommons" id="P0DN80"/>
<dbReference type="SignaLink" id="P0DN80"/>
<dbReference type="Pharos" id="P0DN80">
    <property type="development level" value="Tdark"/>
</dbReference>
<dbReference type="PRO" id="PR:P0DN80"/>
<dbReference type="Proteomes" id="UP000005640">
    <property type="component" value="Unplaced"/>
</dbReference>
<dbReference type="RNAct" id="P0DN80">
    <property type="molecule type" value="protein"/>
</dbReference>
<dbReference type="GO" id="GO:0005886">
    <property type="term" value="C:plasma membrane"/>
    <property type="evidence" value="ECO:0007669"/>
    <property type="project" value="UniProtKB-SubCell"/>
</dbReference>
<dbReference type="GO" id="GO:0004930">
    <property type="term" value="F:G protein-coupled receptor activity"/>
    <property type="evidence" value="ECO:0007669"/>
    <property type="project" value="UniProtKB-KW"/>
</dbReference>
<dbReference type="GO" id="GO:0005549">
    <property type="term" value="F:odorant binding"/>
    <property type="evidence" value="ECO:0000318"/>
    <property type="project" value="GO_Central"/>
</dbReference>
<dbReference type="GO" id="GO:0004984">
    <property type="term" value="F:olfactory receptor activity"/>
    <property type="evidence" value="ECO:0000318"/>
    <property type="project" value="GO_Central"/>
</dbReference>
<dbReference type="FunFam" id="1.20.1070.10:FF:000004">
    <property type="entry name" value="Olfactory receptor"/>
    <property type="match status" value="1"/>
</dbReference>
<dbReference type="Gene3D" id="1.20.1070.10">
    <property type="entry name" value="Rhodopsin 7-helix transmembrane proteins"/>
    <property type="match status" value="1"/>
</dbReference>
<dbReference type="InterPro" id="IPR000276">
    <property type="entry name" value="GPCR_Rhodpsn"/>
</dbReference>
<dbReference type="InterPro" id="IPR017452">
    <property type="entry name" value="GPCR_Rhodpsn_7TM"/>
</dbReference>
<dbReference type="InterPro" id="IPR000725">
    <property type="entry name" value="Olfact_rcpt"/>
</dbReference>
<dbReference type="PANTHER" id="PTHR48018">
    <property type="entry name" value="OLFACTORY RECEPTOR"/>
    <property type="match status" value="1"/>
</dbReference>
<dbReference type="Pfam" id="PF13853">
    <property type="entry name" value="7tm_4"/>
    <property type="match status" value="1"/>
</dbReference>
<dbReference type="PRINTS" id="PR00237">
    <property type="entry name" value="GPCRRHODOPSN"/>
</dbReference>
<dbReference type="PRINTS" id="PR00245">
    <property type="entry name" value="OLFACTORYR"/>
</dbReference>
<dbReference type="SUPFAM" id="SSF81321">
    <property type="entry name" value="Family A G protein-coupled receptor-like"/>
    <property type="match status" value="1"/>
</dbReference>
<dbReference type="PROSITE" id="PS00237">
    <property type="entry name" value="G_PROTEIN_RECEP_F1_1"/>
    <property type="match status" value="1"/>
</dbReference>
<dbReference type="PROSITE" id="PS50262">
    <property type="entry name" value="G_PROTEIN_RECEP_F1_2"/>
    <property type="match status" value="1"/>
</dbReference>
<keyword id="KW-1003">Cell membrane</keyword>
<keyword id="KW-1015">Disulfide bond</keyword>
<keyword id="KW-0297">G-protein coupled receptor</keyword>
<keyword id="KW-0472">Membrane</keyword>
<keyword id="KW-0552">Olfaction</keyword>
<keyword id="KW-0675">Receptor</keyword>
<keyword id="KW-1185">Reference proteome</keyword>
<keyword id="KW-0716">Sensory transduction</keyword>
<keyword id="KW-0807">Transducer</keyword>
<keyword id="KW-0812">Transmembrane</keyword>
<keyword id="KW-1133">Transmembrane helix</keyword>
<comment type="function">
    <text evidence="5">Odorant receptor.</text>
</comment>
<comment type="subcellular location">
    <subcellularLocation>
        <location evidence="5">Cell membrane</location>
        <topology evidence="1">Multi-pass membrane protein</topology>
    </subcellularLocation>
</comment>
<comment type="polymorphism">
    <text evidence="3">Segregating pseudogene, locus showing both intact and pseudogene forms in the population. A single nucleotide deletion at position Lys-229 in the gene coding for this protein is responsible for functional diversity, producing a pseudogene.</text>
</comment>
<comment type="similarity">
    <text evidence="2">Belongs to the G-protein coupled receptor 1 family.</text>
</comment>
<comment type="online information" name="Human Olfactory Receptor Data Exploratorium (HORDE)">
    <link uri="http://genome.weizmann.ac.il/horde/card/index/symbol:OR5H8"/>
</comment>
<protein>
    <recommendedName>
        <fullName>Olfactory receptor 5H8</fullName>
    </recommendedName>
    <alternativeName>
        <fullName>Olfactory receptor 5H8 pseudogene</fullName>
    </alternativeName>
    <alternativeName>
        <fullName evidence="4">Olfactory receptor OR3-7</fullName>
    </alternativeName>
</protein>
<sequence>MDDENATLLTEFVLTGLTYQSEWKIPLFLAFLVIYLITIMANLGLIAVIWKDSHLHIPMYLFLGSLAFVDAWLSSSVTPKMLISFLAKSMIISVSECKIQFFSFGISGTTECFLLATMAYDRYVAICKPLLYPVIMTNGLCIWLLVLSFIGGFLHALIHEGILFRLTFCNSNIIHHFYCDIIPLLKISCTDPSINFLMLFILSGSIQVFTILTVLVSYTFVLFTILKKKAKDIRKAFSTCGAHLLSVSLYYGPLLFMYVHPASPQADDQDMVESLFYTVIIPFLNPIIYSLRNKQVIDSLTKTLKGNV</sequence>
<proteinExistence type="inferred from homology"/>
<organism>
    <name type="scientific">Homo sapiens</name>
    <name type="common">Human</name>
    <dbReference type="NCBI Taxonomy" id="9606"/>
    <lineage>
        <taxon>Eukaryota</taxon>
        <taxon>Metazoa</taxon>
        <taxon>Chordata</taxon>
        <taxon>Craniata</taxon>
        <taxon>Vertebrata</taxon>
        <taxon>Euteleostomi</taxon>
        <taxon>Mammalia</taxon>
        <taxon>Eutheria</taxon>
        <taxon>Euarchontoglires</taxon>
        <taxon>Primates</taxon>
        <taxon>Haplorrhini</taxon>
        <taxon>Catarrhini</taxon>
        <taxon>Hominidae</taxon>
        <taxon>Homo</taxon>
    </lineage>
</organism>
<reference key="1">
    <citation type="journal article" date="2006" name="Nature">
        <title>The DNA sequence, annotation and analysis of human chromosome 3.</title>
        <authorList>
            <person name="Muzny D.M."/>
            <person name="Scherer S.E."/>
            <person name="Kaul R."/>
            <person name="Wang J."/>
            <person name="Yu J."/>
            <person name="Sudbrak R."/>
            <person name="Buhay C.J."/>
            <person name="Chen R."/>
            <person name="Cree A."/>
            <person name="Ding Y."/>
            <person name="Dugan-Rocha S."/>
            <person name="Gill R."/>
            <person name="Gunaratne P."/>
            <person name="Harris R.A."/>
            <person name="Hawes A.C."/>
            <person name="Hernandez J."/>
            <person name="Hodgson A.V."/>
            <person name="Hume J."/>
            <person name="Jackson A."/>
            <person name="Khan Z.M."/>
            <person name="Kovar-Smith C."/>
            <person name="Lewis L.R."/>
            <person name="Lozado R.J."/>
            <person name="Metzker M.L."/>
            <person name="Milosavljevic A."/>
            <person name="Miner G.R."/>
            <person name="Morgan M.B."/>
            <person name="Nazareth L.V."/>
            <person name="Scott G."/>
            <person name="Sodergren E."/>
            <person name="Song X.-Z."/>
            <person name="Steffen D."/>
            <person name="Wei S."/>
            <person name="Wheeler D.A."/>
            <person name="Wright M.W."/>
            <person name="Worley K.C."/>
            <person name="Yuan Y."/>
            <person name="Zhang Z."/>
            <person name="Adams C.Q."/>
            <person name="Ansari-Lari M.A."/>
            <person name="Ayele M."/>
            <person name="Brown M.J."/>
            <person name="Chen G."/>
            <person name="Chen Z."/>
            <person name="Clendenning J."/>
            <person name="Clerc-Blankenburg K.P."/>
            <person name="Chen R."/>
            <person name="Chen Z."/>
            <person name="Davis C."/>
            <person name="Delgado O."/>
            <person name="Dinh H.H."/>
            <person name="Dong W."/>
            <person name="Draper H."/>
            <person name="Ernst S."/>
            <person name="Fu G."/>
            <person name="Gonzalez-Garay M.L."/>
            <person name="Garcia D.K."/>
            <person name="Gillett W."/>
            <person name="Gu J."/>
            <person name="Hao B."/>
            <person name="Haugen E."/>
            <person name="Havlak P."/>
            <person name="He X."/>
            <person name="Hennig S."/>
            <person name="Hu S."/>
            <person name="Huang W."/>
            <person name="Jackson L.R."/>
            <person name="Jacob L.S."/>
            <person name="Kelly S.H."/>
            <person name="Kube M."/>
            <person name="Levy R."/>
            <person name="Li Z."/>
            <person name="Liu B."/>
            <person name="Liu J."/>
            <person name="Liu W."/>
            <person name="Lu J."/>
            <person name="Maheshwari M."/>
            <person name="Nguyen B.-V."/>
            <person name="Okwuonu G.O."/>
            <person name="Palmeiri A."/>
            <person name="Pasternak S."/>
            <person name="Perez L.M."/>
            <person name="Phelps K.A."/>
            <person name="Plopper F.J."/>
            <person name="Qiang B."/>
            <person name="Raymond C."/>
            <person name="Rodriguez R."/>
            <person name="Saenphimmachak C."/>
            <person name="Santibanez J."/>
            <person name="Shen H."/>
            <person name="Shen Y."/>
            <person name="Subramanian S."/>
            <person name="Tabor P.E."/>
            <person name="Verduzco D."/>
            <person name="Waldron L."/>
            <person name="Wang J."/>
            <person name="Wang J."/>
            <person name="Wang Q."/>
            <person name="Williams G.A."/>
            <person name="Wong G.K.-S."/>
            <person name="Yao Z."/>
            <person name="Zhang J."/>
            <person name="Zhang X."/>
            <person name="Zhao G."/>
            <person name="Zhou J."/>
            <person name="Zhou Y."/>
            <person name="Nelson D."/>
            <person name="Lehrach H."/>
            <person name="Reinhardt R."/>
            <person name="Naylor S.L."/>
            <person name="Yang H."/>
            <person name="Olson M."/>
            <person name="Weinstock G."/>
            <person name="Gibbs R.A."/>
        </authorList>
    </citation>
    <scope>NUCLEOTIDE SEQUENCE [LARGE SCALE GENOMIC DNA]</scope>
</reference>
<reference key="2">
    <citation type="journal article" date="2004" name="Proc. Natl. Acad. Sci. U.S.A.">
        <title>The human olfactory receptor gene family.</title>
        <authorList>
            <person name="Malnic B."/>
            <person name="Godfrey P.A."/>
            <person name="Buck L.B."/>
        </authorList>
    </citation>
    <scope>IDENTIFICATION</scope>
</reference>
<reference key="3">
    <citation type="journal article" date="2004" name="Proc. Natl. Acad. Sci. U.S.A.">
        <authorList>
            <person name="Malnic B."/>
            <person name="Godfrey P.A."/>
            <person name="Buck L.B."/>
        </authorList>
    </citation>
    <scope>ERRATUM OF PUBMED:14983052</scope>
</reference>
<reference key="4">
    <citation type="journal article" date="2012" name="BMC Genomics">
        <title>Personal receptor repertoires: olfaction as a model.</title>
        <authorList>
            <person name="Olender T."/>
            <person name="Waszak S.M."/>
            <person name="Viavant M."/>
            <person name="Khen M."/>
            <person name="Ben-Asher E."/>
            <person name="Reyes A."/>
            <person name="Nativ N."/>
            <person name="Wysocki C.J."/>
            <person name="Ge D."/>
            <person name="Lancet D."/>
        </authorList>
    </citation>
    <scope>POLYMORPHISM</scope>
</reference>
<accession>P0DN80</accession>
<gene>
    <name evidence="6" type="primary">OR5H8</name>
    <name type="synonym">OR5H8P</name>
</gene>
<feature type="chain" id="PRO_0000435454" description="Olfactory receptor 5H8">
    <location>
        <begin position="1"/>
        <end position="308"/>
    </location>
</feature>
<feature type="topological domain" description="Extracellular" evidence="5">
    <location>
        <begin position="1"/>
        <end position="28"/>
    </location>
</feature>
<feature type="transmembrane region" description="Helical; Name=1" evidence="1">
    <location>
        <begin position="29"/>
        <end position="49"/>
    </location>
</feature>
<feature type="topological domain" description="Cytoplasmic" evidence="5">
    <location>
        <begin position="50"/>
        <end position="56"/>
    </location>
</feature>
<feature type="transmembrane region" description="Helical; Name=2" evidence="1">
    <location>
        <begin position="57"/>
        <end position="77"/>
    </location>
</feature>
<feature type="topological domain" description="Extracellular" evidence="5">
    <location>
        <begin position="78"/>
        <end position="98"/>
    </location>
</feature>
<feature type="transmembrane region" description="Helical; Name=3" evidence="1">
    <location>
        <begin position="99"/>
        <end position="119"/>
    </location>
</feature>
<feature type="topological domain" description="Cytoplasmic" evidence="5">
    <location>
        <begin position="120"/>
        <end position="133"/>
    </location>
</feature>
<feature type="transmembrane region" description="Helical; Name=4" evidence="1">
    <location>
        <begin position="134"/>
        <end position="154"/>
    </location>
</feature>
<feature type="topological domain" description="Extracellular" evidence="5">
    <location>
        <begin position="155"/>
        <end position="195"/>
    </location>
</feature>
<feature type="transmembrane region" description="Helical; Name=5" evidence="1">
    <location>
        <begin position="196"/>
        <end position="216"/>
    </location>
</feature>
<feature type="topological domain" description="Cytoplasmic" evidence="5">
    <location>
        <begin position="217"/>
        <end position="238"/>
    </location>
</feature>
<feature type="transmembrane region" description="Helical; Name=6" evidence="1">
    <location>
        <begin position="239"/>
        <end position="259"/>
    </location>
</feature>
<feature type="topological domain" description="Extracellular" evidence="5">
    <location>
        <begin position="260"/>
        <end position="270"/>
    </location>
</feature>
<feature type="transmembrane region" description="Helical; Name=7" evidence="1">
    <location>
        <begin position="271"/>
        <end position="291"/>
    </location>
</feature>
<feature type="topological domain" description="Cytoplasmic" evidence="5">
    <location>
        <begin position="292"/>
        <end position="308"/>
    </location>
</feature>
<feature type="disulfide bond" evidence="2">
    <location>
        <begin position="97"/>
        <end position="179"/>
    </location>
</feature>